<comment type="function">
    <text evidence="1">One of two assembly initiator proteins, it binds directly to the 5'-end of the 23S rRNA, where it nucleates assembly of the 50S subunit.</text>
</comment>
<comment type="function">
    <text evidence="1">One of the proteins that surrounds the polypeptide exit tunnel on the outside of the subunit.</text>
</comment>
<comment type="subunit">
    <text evidence="1">Part of the 50S ribosomal subunit.</text>
</comment>
<comment type="similarity">
    <text evidence="1">Belongs to the universal ribosomal protein uL24 family.</text>
</comment>
<name>RL24_ALKOO</name>
<organism>
    <name type="scientific">Alkaliphilus oremlandii (strain OhILAs)</name>
    <name type="common">Clostridium oremlandii (strain OhILAs)</name>
    <dbReference type="NCBI Taxonomy" id="350688"/>
    <lineage>
        <taxon>Bacteria</taxon>
        <taxon>Bacillati</taxon>
        <taxon>Bacillota</taxon>
        <taxon>Clostridia</taxon>
        <taxon>Peptostreptococcales</taxon>
        <taxon>Natronincolaceae</taxon>
        <taxon>Alkaliphilus</taxon>
    </lineage>
</organism>
<accession>A8MLF1</accession>
<reference key="1">
    <citation type="submission" date="2007-10" db="EMBL/GenBank/DDBJ databases">
        <title>Complete genome of Alkaliphilus oremlandii OhILAs.</title>
        <authorList>
            <person name="Copeland A."/>
            <person name="Lucas S."/>
            <person name="Lapidus A."/>
            <person name="Barry K."/>
            <person name="Detter J.C."/>
            <person name="Glavina del Rio T."/>
            <person name="Hammon N."/>
            <person name="Israni S."/>
            <person name="Dalin E."/>
            <person name="Tice H."/>
            <person name="Pitluck S."/>
            <person name="Chain P."/>
            <person name="Malfatti S."/>
            <person name="Shin M."/>
            <person name="Vergez L."/>
            <person name="Schmutz J."/>
            <person name="Larimer F."/>
            <person name="Land M."/>
            <person name="Hauser L."/>
            <person name="Kyrpides N."/>
            <person name="Mikhailova N."/>
            <person name="Stolz J.F."/>
            <person name="Dawson A."/>
            <person name="Fisher E."/>
            <person name="Crable B."/>
            <person name="Perera E."/>
            <person name="Lisak J."/>
            <person name="Ranganathan M."/>
            <person name="Basu P."/>
            <person name="Richardson P."/>
        </authorList>
    </citation>
    <scope>NUCLEOTIDE SEQUENCE [LARGE SCALE GENOMIC DNA]</scope>
    <source>
        <strain>OhILAs</strain>
    </source>
</reference>
<keyword id="KW-1185">Reference proteome</keyword>
<keyword id="KW-0687">Ribonucleoprotein</keyword>
<keyword id="KW-0689">Ribosomal protein</keyword>
<keyword id="KW-0694">RNA-binding</keyword>
<keyword id="KW-0699">rRNA-binding</keyword>
<gene>
    <name evidence="1" type="primary">rplX</name>
    <name type="ordered locus">Clos_0503</name>
</gene>
<evidence type="ECO:0000255" key="1">
    <source>
        <dbReference type="HAMAP-Rule" id="MF_01326"/>
    </source>
</evidence>
<evidence type="ECO:0000305" key="2"/>
<dbReference type="EMBL" id="CP000853">
    <property type="protein sequence ID" value="ABW18065.1"/>
    <property type="molecule type" value="Genomic_DNA"/>
</dbReference>
<dbReference type="RefSeq" id="WP_012158379.1">
    <property type="nucleotide sequence ID" value="NC_009922.1"/>
</dbReference>
<dbReference type="SMR" id="A8MLF1"/>
<dbReference type="STRING" id="350688.Clos_0503"/>
<dbReference type="KEGG" id="aoe:Clos_0503"/>
<dbReference type="eggNOG" id="COG0198">
    <property type="taxonomic scope" value="Bacteria"/>
</dbReference>
<dbReference type="HOGENOM" id="CLU_093315_2_3_9"/>
<dbReference type="OrthoDB" id="9807419at2"/>
<dbReference type="Proteomes" id="UP000000269">
    <property type="component" value="Chromosome"/>
</dbReference>
<dbReference type="GO" id="GO:1990904">
    <property type="term" value="C:ribonucleoprotein complex"/>
    <property type="evidence" value="ECO:0007669"/>
    <property type="project" value="UniProtKB-KW"/>
</dbReference>
<dbReference type="GO" id="GO:0005840">
    <property type="term" value="C:ribosome"/>
    <property type="evidence" value="ECO:0007669"/>
    <property type="project" value="UniProtKB-KW"/>
</dbReference>
<dbReference type="GO" id="GO:0019843">
    <property type="term" value="F:rRNA binding"/>
    <property type="evidence" value="ECO:0007669"/>
    <property type="project" value="UniProtKB-UniRule"/>
</dbReference>
<dbReference type="GO" id="GO:0003735">
    <property type="term" value="F:structural constituent of ribosome"/>
    <property type="evidence" value="ECO:0007669"/>
    <property type="project" value="InterPro"/>
</dbReference>
<dbReference type="GO" id="GO:0006412">
    <property type="term" value="P:translation"/>
    <property type="evidence" value="ECO:0007669"/>
    <property type="project" value="UniProtKB-UniRule"/>
</dbReference>
<dbReference type="CDD" id="cd06089">
    <property type="entry name" value="KOW_RPL26"/>
    <property type="match status" value="1"/>
</dbReference>
<dbReference type="FunFam" id="2.30.30.30:FF:000004">
    <property type="entry name" value="50S ribosomal protein L24"/>
    <property type="match status" value="1"/>
</dbReference>
<dbReference type="Gene3D" id="2.30.30.30">
    <property type="match status" value="1"/>
</dbReference>
<dbReference type="HAMAP" id="MF_01326_B">
    <property type="entry name" value="Ribosomal_uL24_B"/>
    <property type="match status" value="1"/>
</dbReference>
<dbReference type="InterPro" id="IPR005824">
    <property type="entry name" value="KOW"/>
</dbReference>
<dbReference type="InterPro" id="IPR014722">
    <property type="entry name" value="Rib_uL2_dom2"/>
</dbReference>
<dbReference type="InterPro" id="IPR003256">
    <property type="entry name" value="Ribosomal_uL24"/>
</dbReference>
<dbReference type="InterPro" id="IPR005825">
    <property type="entry name" value="Ribosomal_uL24_CS"/>
</dbReference>
<dbReference type="InterPro" id="IPR041988">
    <property type="entry name" value="Ribosomal_uL24_KOW"/>
</dbReference>
<dbReference type="InterPro" id="IPR008991">
    <property type="entry name" value="Translation_prot_SH3-like_sf"/>
</dbReference>
<dbReference type="NCBIfam" id="TIGR01079">
    <property type="entry name" value="rplX_bact"/>
    <property type="match status" value="1"/>
</dbReference>
<dbReference type="PANTHER" id="PTHR12903">
    <property type="entry name" value="MITOCHONDRIAL RIBOSOMAL PROTEIN L24"/>
    <property type="match status" value="1"/>
</dbReference>
<dbReference type="Pfam" id="PF00467">
    <property type="entry name" value="KOW"/>
    <property type="match status" value="1"/>
</dbReference>
<dbReference type="Pfam" id="PF17136">
    <property type="entry name" value="ribosomal_L24"/>
    <property type="match status" value="1"/>
</dbReference>
<dbReference type="SMART" id="SM00739">
    <property type="entry name" value="KOW"/>
    <property type="match status" value="1"/>
</dbReference>
<dbReference type="SUPFAM" id="SSF50104">
    <property type="entry name" value="Translation proteins SH3-like domain"/>
    <property type="match status" value="1"/>
</dbReference>
<dbReference type="PROSITE" id="PS01108">
    <property type="entry name" value="RIBOSOMAL_L24"/>
    <property type="match status" value="1"/>
</dbReference>
<proteinExistence type="inferred from homology"/>
<feature type="chain" id="PRO_1000067576" description="Large ribosomal subunit protein uL24">
    <location>
        <begin position="1"/>
        <end position="102"/>
    </location>
</feature>
<sequence length="102" mass="11275">MHVKKGDTVVVITGKDKGKKGKVLQVLPKKNRVIVEGVAMVTKHQKPNQQMQQGGRIEQEAAIDASNVMIWDKKANQGVRVGYKLENGKKVRVSKKTGEVID</sequence>
<protein>
    <recommendedName>
        <fullName evidence="1">Large ribosomal subunit protein uL24</fullName>
    </recommendedName>
    <alternativeName>
        <fullName evidence="2">50S ribosomal protein L24</fullName>
    </alternativeName>
</protein>